<sequence>MSRVAKAPVSIPAGVEVTLNEQTLTVKGAKGSLTRVINNAVNVVIEDGVIKFLPVEGAVGAWAQAGTTRALVNNMVVGVSQGFERKLKLVGVGYRAKLVGADIDLTLGFSHPLVHKLPAGVTAECPSQTDIVLRGVDKQLIGQVAAEIRGYRPPEPYKGKGVRYDDEEVRRKEAKKK</sequence>
<dbReference type="EMBL" id="CP000446">
    <property type="protein sequence ID" value="ABI37295.1"/>
    <property type="molecule type" value="Genomic_DNA"/>
</dbReference>
<dbReference type="RefSeq" id="WP_011621031.1">
    <property type="nucleotide sequence ID" value="NC_008321.1"/>
</dbReference>
<dbReference type="SMR" id="Q0HNS2"/>
<dbReference type="KEGG" id="she:Shewmr4_0214"/>
<dbReference type="HOGENOM" id="CLU_065464_1_2_6"/>
<dbReference type="GO" id="GO:0022625">
    <property type="term" value="C:cytosolic large ribosomal subunit"/>
    <property type="evidence" value="ECO:0007669"/>
    <property type="project" value="TreeGrafter"/>
</dbReference>
<dbReference type="GO" id="GO:0019843">
    <property type="term" value="F:rRNA binding"/>
    <property type="evidence" value="ECO:0007669"/>
    <property type="project" value="UniProtKB-UniRule"/>
</dbReference>
<dbReference type="GO" id="GO:0003735">
    <property type="term" value="F:structural constituent of ribosome"/>
    <property type="evidence" value="ECO:0007669"/>
    <property type="project" value="InterPro"/>
</dbReference>
<dbReference type="GO" id="GO:0002181">
    <property type="term" value="P:cytoplasmic translation"/>
    <property type="evidence" value="ECO:0007669"/>
    <property type="project" value="TreeGrafter"/>
</dbReference>
<dbReference type="FunFam" id="3.90.930.12:FF:000001">
    <property type="entry name" value="50S ribosomal protein L6"/>
    <property type="match status" value="1"/>
</dbReference>
<dbReference type="FunFam" id="3.90.930.12:FF:000002">
    <property type="entry name" value="50S ribosomal protein L6"/>
    <property type="match status" value="1"/>
</dbReference>
<dbReference type="Gene3D" id="3.90.930.12">
    <property type="entry name" value="Ribosomal protein L6, alpha-beta domain"/>
    <property type="match status" value="2"/>
</dbReference>
<dbReference type="HAMAP" id="MF_01365_B">
    <property type="entry name" value="Ribosomal_uL6_B"/>
    <property type="match status" value="1"/>
</dbReference>
<dbReference type="InterPro" id="IPR000702">
    <property type="entry name" value="Ribosomal_uL6-like"/>
</dbReference>
<dbReference type="InterPro" id="IPR036789">
    <property type="entry name" value="Ribosomal_uL6-like_a/b-dom_sf"/>
</dbReference>
<dbReference type="InterPro" id="IPR020040">
    <property type="entry name" value="Ribosomal_uL6_a/b-dom"/>
</dbReference>
<dbReference type="InterPro" id="IPR019906">
    <property type="entry name" value="Ribosomal_uL6_bac-type"/>
</dbReference>
<dbReference type="InterPro" id="IPR002358">
    <property type="entry name" value="Ribosomal_uL6_CS"/>
</dbReference>
<dbReference type="NCBIfam" id="TIGR03654">
    <property type="entry name" value="L6_bact"/>
    <property type="match status" value="1"/>
</dbReference>
<dbReference type="PANTHER" id="PTHR11655">
    <property type="entry name" value="60S/50S RIBOSOMAL PROTEIN L6/L9"/>
    <property type="match status" value="1"/>
</dbReference>
<dbReference type="PANTHER" id="PTHR11655:SF14">
    <property type="entry name" value="LARGE RIBOSOMAL SUBUNIT PROTEIN UL6M"/>
    <property type="match status" value="1"/>
</dbReference>
<dbReference type="Pfam" id="PF00347">
    <property type="entry name" value="Ribosomal_L6"/>
    <property type="match status" value="2"/>
</dbReference>
<dbReference type="PIRSF" id="PIRSF002162">
    <property type="entry name" value="Ribosomal_L6"/>
    <property type="match status" value="1"/>
</dbReference>
<dbReference type="PRINTS" id="PR00059">
    <property type="entry name" value="RIBOSOMALL6"/>
</dbReference>
<dbReference type="SUPFAM" id="SSF56053">
    <property type="entry name" value="Ribosomal protein L6"/>
    <property type="match status" value="2"/>
</dbReference>
<dbReference type="PROSITE" id="PS00525">
    <property type="entry name" value="RIBOSOMAL_L6_1"/>
    <property type="match status" value="1"/>
</dbReference>
<reference key="1">
    <citation type="submission" date="2006-08" db="EMBL/GenBank/DDBJ databases">
        <title>Complete sequence of Shewanella sp. MR-4.</title>
        <authorList>
            <consortium name="US DOE Joint Genome Institute"/>
            <person name="Copeland A."/>
            <person name="Lucas S."/>
            <person name="Lapidus A."/>
            <person name="Barry K."/>
            <person name="Detter J.C."/>
            <person name="Glavina del Rio T."/>
            <person name="Hammon N."/>
            <person name="Israni S."/>
            <person name="Dalin E."/>
            <person name="Tice H."/>
            <person name="Pitluck S."/>
            <person name="Kiss H."/>
            <person name="Brettin T."/>
            <person name="Bruce D."/>
            <person name="Han C."/>
            <person name="Tapia R."/>
            <person name="Gilna P."/>
            <person name="Schmutz J."/>
            <person name="Larimer F."/>
            <person name="Land M."/>
            <person name="Hauser L."/>
            <person name="Kyrpides N."/>
            <person name="Mikhailova N."/>
            <person name="Nealson K."/>
            <person name="Konstantinidis K."/>
            <person name="Klappenbach J."/>
            <person name="Tiedje J."/>
            <person name="Richardson P."/>
        </authorList>
    </citation>
    <scope>NUCLEOTIDE SEQUENCE [LARGE SCALE GENOMIC DNA]</scope>
    <source>
        <strain>MR-4</strain>
    </source>
</reference>
<organism>
    <name type="scientific">Shewanella sp. (strain MR-4)</name>
    <dbReference type="NCBI Taxonomy" id="60480"/>
    <lineage>
        <taxon>Bacteria</taxon>
        <taxon>Pseudomonadati</taxon>
        <taxon>Pseudomonadota</taxon>
        <taxon>Gammaproteobacteria</taxon>
        <taxon>Alteromonadales</taxon>
        <taxon>Shewanellaceae</taxon>
        <taxon>Shewanella</taxon>
    </lineage>
</organism>
<protein>
    <recommendedName>
        <fullName evidence="1">Large ribosomal subunit protein uL6</fullName>
    </recommendedName>
    <alternativeName>
        <fullName evidence="3">50S ribosomal protein L6</fullName>
    </alternativeName>
</protein>
<feature type="chain" id="PRO_0000265296" description="Large ribosomal subunit protein uL6">
    <location>
        <begin position="1"/>
        <end position="177"/>
    </location>
</feature>
<feature type="region of interest" description="Disordered" evidence="2">
    <location>
        <begin position="152"/>
        <end position="177"/>
    </location>
</feature>
<feature type="compositionally biased region" description="Basic and acidic residues" evidence="2">
    <location>
        <begin position="152"/>
        <end position="171"/>
    </location>
</feature>
<comment type="function">
    <text evidence="1">This protein binds to the 23S rRNA, and is important in its secondary structure. It is located near the subunit interface in the base of the L7/L12 stalk, and near the tRNA binding site of the peptidyltransferase center.</text>
</comment>
<comment type="subunit">
    <text evidence="1">Part of the 50S ribosomal subunit.</text>
</comment>
<comment type="similarity">
    <text evidence="1">Belongs to the universal ribosomal protein uL6 family.</text>
</comment>
<evidence type="ECO:0000255" key="1">
    <source>
        <dbReference type="HAMAP-Rule" id="MF_01365"/>
    </source>
</evidence>
<evidence type="ECO:0000256" key="2">
    <source>
        <dbReference type="SAM" id="MobiDB-lite"/>
    </source>
</evidence>
<evidence type="ECO:0000305" key="3"/>
<proteinExistence type="inferred from homology"/>
<accession>Q0HNS2</accession>
<gene>
    <name evidence="1" type="primary">rplF</name>
    <name type="ordered locus">Shewmr4_0214</name>
</gene>
<name>RL6_SHESM</name>
<keyword id="KW-0687">Ribonucleoprotein</keyword>
<keyword id="KW-0689">Ribosomal protein</keyword>
<keyword id="KW-0694">RNA-binding</keyword>
<keyword id="KW-0699">rRNA-binding</keyword>